<accession>Q02QC9</accession>
<gene>
    <name type="primary">phoA</name>
    <name type="ordered locus">PA14_21410</name>
</gene>
<reference key="1">
    <citation type="journal article" date="2006" name="Genome Biol.">
        <title>Genomic analysis reveals that Pseudomonas aeruginosa virulence is combinatorial.</title>
        <authorList>
            <person name="Lee D.G."/>
            <person name="Urbach J.M."/>
            <person name="Wu G."/>
            <person name="Liberati N.T."/>
            <person name="Feinbaum R.L."/>
            <person name="Miyata S."/>
            <person name="Diggins L.T."/>
            <person name="He J."/>
            <person name="Saucier M."/>
            <person name="Deziel E."/>
            <person name="Friedman L."/>
            <person name="Li L."/>
            <person name="Grills G."/>
            <person name="Montgomery K."/>
            <person name="Kucherlapati R."/>
            <person name="Rahme L.G."/>
            <person name="Ausubel F.M."/>
        </authorList>
    </citation>
    <scope>NUCLEOTIDE SEQUENCE [LARGE SCALE GENOMIC DNA]</scope>
    <source>
        <strain>UCBPP-PA14</strain>
    </source>
</reference>
<reference key="2">
    <citation type="journal article" date="2014" name="Anal. Bioanal. Chem.">
        <title>Potential of liquid-isoelectric-focusing protein fractionation to improve phosphoprotein characterization of Pseudomonas aeruginosa PA14.</title>
        <authorList>
            <person name="Ouidir T."/>
            <person name="Jarnier F."/>
            <person name="Cosette P."/>
            <person name="Jouenne T."/>
            <person name="Hardouin J."/>
        </authorList>
    </citation>
    <scope>IDENTIFICATION BY MASS SPECTROMETRY</scope>
    <scope>PHOSPHORYLATION AT SER-128</scope>
    <source>
        <strain>UCBPP-PA14</strain>
    </source>
</reference>
<reference key="3">
    <citation type="journal article" date="2014" name="Proteomics">
        <title>Extracellular Ser/Thr/Tyr phosphorylated proteins of Pseudomonas aeruginosa PA14 strain.</title>
        <authorList>
            <person name="Ouidir T."/>
            <person name="Jarnier F."/>
            <person name="Cosette P."/>
            <person name="Jouenne T."/>
            <person name="Hardouin J."/>
        </authorList>
    </citation>
    <scope>IDENTIFICATION BY MASS SPECTROMETRY</scope>
    <scope>SUBCELLULAR LOCATION</scope>
    <scope>PHOSPHORYLATION AT SER-128 AND SER-206</scope>
    <source>
        <strain>UCBPP-PA14</strain>
    </source>
</reference>
<evidence type="ECO:0000250" key="1"/>
<evidence type="ECO:0000250" key="2">
    <source>
        <dbReference type="UniProtKB" id="P35483"/>
    </source>
</evidence>
<evidence type="ECO:0000255" key="3"/>
<evidence type="ECO:0000255" key="4">
    <source>
        <dbReference type="PROSITE-ProRule" id="PRU10042"/>
    </source>
</evidence>
<evidence type="ECO:0000255" key="5">
    <source>
        <dbReference type="RuleBase" id="RU003946"/>
    </source>
</evidence>
<evidence type="ECO:0000269" key="6">
    <source>
    </source>
</evidence>
<evidence type="ECO:0000269" key="7">
    <source>
    </source>
</evidence>
<evidence type="ECO:0000305" key="8"/>
<sequence>MTPGYPLALSLAVSMAVLGSALPAQARQDDPSLFNRQARGELSEYGGARRVEQDLTQALKQSLSKKKAKNVILLIGDGMGDSEITVARNYARGAGGYFKGIDALPLTGQYTHYSLHKDSGLPDYVTDSAASATAWTTGVKSYNGAIGVDIHEQPHRNLLELAKLNGKATGNVSTAELQDATPAALLAHVTARKCYGPEATSKQCPSNALENGGAGSITEQWLKTRPDVVLGGGAATFAETAKAGRYAGKTLRAQAEARGYRIVENLDELKAVRRANQKQPLIGLFAPGNMPVRWLGPTATYHGNLNQPAVSCEANPKRTADIPTLAQMTSKAIELLKDNPNGFFLQVEGASIDKQDHAANPCGQIGETVDLDEAVQKALAFAKADGETLVIVTADHAHSSQIIPPETAAPGLTQLLTTKDGAPLAISYGNSEEGSQEHTGTQLRIAAYGPQAANVTGLTDQTDLFFTIRRALNLRD</sequence>
<proteinExistence type="evidence at protein level"/>
<organism>
    <name type="scientific">Pseudomonas aeruginosa (strain UCBPP-PA14)</name>
    <dbReference type="NCBI Taxonomy" id="208963"/>
    <lineage>
        <taxon>Bacteria</taxon>
        <taxon>Pseudomonadati</taxon>
        <taxon>Pseudomonadota</taxon>
        <taxon>Gammaproteobacteria</taxon>
        <taxon>Pseudomonadales</taxon>
        <taxon>Pseudomonadaceae</taxon>
        <taxon>Pseudomonas</taxon>
    </lineage>
</organism>
<comment type="function">
    <text evidence="2">Has only phosphomonoesterase activity.</text>
</comment>
<comment type="catalytic activity">
    <reaction evidence="4">
        <text>a phosphate monoester + H2O = an alcohol + phosphate</text>
        <dbReference type="Rhea" id="RHEA:15017"/>
        <dbReference type="ChEBI" id="CHEBI:15377"/>
        <dbReference type="ChEBI" id="CHEBI:30879"/>
        <dbReference type="ChEBI" id="CHEBI:43474"/>
        <dbReference type="ChEBI" id="CHEBI:67140"/>
        <dbReference type="EC" id="3.1.3.1"/>
    </reaction>
</comment>
<comment type="cofactor">
    <cofactor>
        <name>Mg(2+)</name>
        <dbReference type="ChEBI" id="CHEBI:18420"/>
    </cofactor>
    <text>Binds 1 Mg(2+) ion per subunit.</text>
</comment>
<comment type="cofactor">
    <cofactor>
        <name>Zn(2+)</name>
        <dbReference type="ChEBI" id="CHEBI:29105"/>
    </cofactor>
    <text>Binds 2 Zn(2+) ions per subunit.</text>
</comment>
<comment type="subcellular location">
    <subcellularLocation>
        <location evidence="6">Secreted</location>
    </subcellularLocation>
    <subcellularLocation>
        <location evidence="2">Periplasm</location>
    </subcellularLocation>
</comment>
<comment type="miscellaneous">
    <text evidence="8">There are 2 known alkaline phosphatase proteins in P.aeruginosa strain PAO1. The larger is well conserved in strain PA14 (this entry), but the other is not well conserved.</text>
</comment>
<comment type="similarity">
    <text evidence="5">Belongs to the alkaline phosphatase family.</text>
</comment>
<keyword id="KW-0378">Hydrolase</keyword>
<keyword id="KW-0460">Magnesium</keyword>
<keyword id="KW-0479">Metal-binding</keyword>
<keyword id="KW-0574">Periplasm</keyword>
<keyword id="KW-0597">Phosphoprotein</keyword>
<keyword id="KW-0964">Secreted</keyword>
<keyword id="KW-0732">Signal</keyword>
<keyword id="KW-0862">Zinc</keyword>
<dbReference type="EC" id="3.1.3.1" evidence="4"/>
<dbReference type="EMBL" id="CP000438">
    <property type="protein sequence ID" value="ABJ12547.1"/>
    <property type="molecule type" value="Genomic_DNA"/>
</dbReference>
<dbReference type="RefSeq" id="WP_003112133.1">
    <property type="nucleotide sequence ID" value="NZ_CP034244.1"/>
</dbReference>
<dbReference type="SMR" id="Q02QC9"/>
<dbReference type="iPTMnet" id="Q02QC9"/>
<dbReference type="KEGG" id="pau:PA14_21410"/>
<dbReference type="PseudoCAP" id="PA14_21410"/>
<dbReference type="HOGENOM" id="CLU_008539_0_1_6"/>
<dbReference type="BioCyc" id="PAER208963:G1G74-1771-MONOMER"/>
<dbReference type="Proteomes" id="UP000000653">
    <property type="component" value="Chromosome"/>
</dbReference>
<dbReference type="GO" id="GO:0005576">
    <property type="term" value="C:extracellular region"/>
    <property type="evidence" value="ECO:0007669"/>
    <property type="project" value="UniProtKB-SubCell"/>
</dbReference>
<dbReference type="GO" id="GO:0042597">
    <property type="term" value="C:periplasmic space"/>
    <property type="evidence" value="ECO:0007669"/>
    <property type="project" value="UniProtKB-SubCell"/>
</dbReference>
<dbReference type="GO" id="GO:0004035">
    <property type="term" value="F:alkaline phosphatase activity"/>
    <property type="evidence" value="ECO:0007669"/>
    <property type="project" value="UniProtKB-EC"/>
</dbReference>
<dbReference type="GO" id="GO:0046872">
    <property type="term" value="F:metal ion binding"/>
    <property type="evidence" value="ECO:0007669"/>
    <property type="project" value="UniProtKB-KW"/>
</dbReference>
<dbReference type="CDD" id="cd16012">
    <property type="entry name" value="ALP"/>
    <property type="match status" value="1"/>
</dbReference>
<dbReference type="Gene3D" id="3.40.720.10">
    <property type="entry name" value="Alkaline Phosphatase, subunit A"/>
    <property type="match status" value="1"/>
</dbReference>
<dbReference type="InterPro" id="IPR001952">
    <property type="entry name" value="Alkaline_phosphatase"/>
</dbReference>
<dbReference type="InterPro" id="IPR018299">
    <property type="entry name" value="Alkaline_phosphatase_AS"/>
</dbReference>
<dbReference type="InterPro" id="IPR017850">
    <property type="entry name" value="Alkaline_phosphatase_core_sf"/>
</dbReference>
<dbReference type="NCBIfam" id="NF007810">
    <property type="entry name" value="PRK10518.1"/>
    <property type="match status" value="1"/>
</dbReference>
<dbReference type="PANTHER" id="PTHR11596">
    <property type="entry name" value="ALKALINE PHOSPHATASE"/>
    <property type="match status" value="1"/>
</dbReference>
<dbReference type="PANTHER" id="PTHR11596:SF5">
    <property type="entry name" value="ALKALINE PHOSPHATASE"/>
    <property type="match status" value="1"/>
</dbReference>
<dbReference type="Pfam" id="PF00245">
    <property type="entry name" value="Alk_phosphatase"/>
    <property type="match status" value="2"/>
</dbReference>
<dbReference type="PRINTS" id="PR00113">
    <property type="entry name" value="ALKPHPHTASE"/>
</dbReference>
<dbReference type="SMART" id="SM00098">
    <property type="entry name" value="alkPPc"/>
    <property type="match status" value="1"/>
</dbReference>
<dbReference type="SUPFAM" id="SSF53649">
    <property type="entry name" value="Alkaline phosphatase-like"/>
    <property type="match status" value="1"/>
</dbReference>
<dbReference type="PROSITE" id="PS00123">
    <property type="entry name" value="ALKALINE_PHOSPHATASE"/>
    <property type="match status" value="1"/>
</dbReference>
<protein>
    <recommendedName>
        <fullName evidence="4">Alkaline phosphatase H</fullName>
        <ecNumber evidence="4">3.1.3.1</ecNumber>
    </recommendedName>
    <alternativeName>
        <fullName>High molecular weight phosphatase</fullName>
        <shortName>H-AP</shortName>
    </alternativeName>
</protein>
<name>PPBH_PSEAB</name>
<feature type="signal peptide" evidence="3">
    <location>
        <begin position="1"/>
        <end position="26"/>
    </location>
</feature>
<feature type="chain" id="PRO_0000431467" description="Alkaline phosphatase H" evidence="3">
    <location>
        <begin position="27"/>
        <end position="476"/>
    </location>
</feature>
<feature type="active site" description="Phosphoserine intermediate" evidence="4 6 7">
    <location>
        <position position="128"/>
    </location>
</feature>
<feature type="binding site" evidence="1">
    <location>
        <position position="77"/>
    </location>
    <ligand>
        <name>Mg(2+)</name>
        <dbReference type="ChEBI" id="CHEBI:18420"/>
    </ligand>
</feature>
<feature type="binding site" evidence="1">
    <location>
        <position position="77"/>
    </location>
    <ligand>
        <name>Zn(2+)</name>
        <dbReference type="ChEBI" id="CHEBI:29105"/>
        <label>2</label>
    </ligand>
</feature>
<feature type="binding site" evidence="1">
    <location>
        <position position="179"/>
    </location>
    <ligand>
        <name>Mg(2+)</name>
        <dbReference type="ChEBI" id="CHEBI:18420"/>
    </ligand>
</feature>
<feature type="binding site" evidence="1">
    <location>
        <position position="181"/>
    </location>
    <ligand>
        <name>Mg(2+)</name>
        <dbReference type="ChEBI" id="CHEBI:18420"/>
    </ligand>
</feature>
<feature type="binding site" evidence="1">
    <location>
        <position position="346"/>
    </location>
    <ligand>
        <name>Mg(2+)</name>
        <dbReference type="ChEBI" id="CHEBI:18420"/>
    </ligand>
</feature>
<feature type="binding site" evidence="1">
    <location>
        <position position="353"/>
    </location>
    <ligand>
        <name>Zn(2+)</name>
        <dbReference type="ChEBI" id="CHEBI:29105"/>
        <label>1</label>
    </ligand>
</feature>
<feature type="binding site" evidence="1">
    <location>
        <position position="357"/>
    </location>
    <ligand>
        <name>Zn(2+)</name>
        <dbReference type="ChEBI" id="CHEBI:29105"/>
        <label>1</label>
    </ligand>
</feature>
<feature type="binding site" evidence="1">
    <location>
        <position position="395"/>
    </location>
    <ligand>
        <name>Zn(2+)</name>
        <dbReference type="ChEBI" id="CHEBI:29105"/>
        <label>2</label>
    </ligand>
</feature>
<feature type="binding site" evidence="1">
    <location>
        <position position="396"/>
    </location>
    <ligand>
        <name>Zn(2+)</name>
        <dbReference type="ChEBI" id="CHEBI:29105"/>
        <label>2</label>
    </ligand>
</feature>
<feature type="binding site" evidence="1">
    <location>
        <position position="438"/>
    </location>
    <ligand>
        <name>Zn(2+)</name>
        <dbReference type="ChEBI" id="CHEBI:29105"/>
        <label>1</label>
    </ligand>
</feature>
<feature type="modified residue" description="Phosphoserine" evidence="6 7">
    <location>
        <position position="128"/>
    </location>
</feature>
<feature type="modified residue" description="Phosphoserine" evidence="6">
    <location>
        <position position="206"/>
    </location>
</feature>